<comment type="function">
    <text evidence="1">This protein binds to the 23S rRNA, and is important in its secondary structure. It is located near the subunit interface in the base of the L7/L12 stalk, and near the tRNA binding site of the peptidyltransferase center.</text>
</comment>
<comment type="subunit">
    <text evidence="1">Part of the 50S ribosomal subunit.</text>
</comment>
<comment type="similarity">
    <text evidence="1">Belongs to the universal ribosomal protein uL6 family.</text>
</comment>
<evidence type="ECO:0000255" key="1">
    <source>
        <dbReference type="HAMAP-Rule" id="MF_01365"/>
    </source>
</evidence>
<evidence type="ECO:0000305" key="2"/>
<proteinExistence type="inferred from homology"/>
<feature type="chain" id="PRO_0000265309" description="Large ribosomal subunit protein uL6">
    <location>
        <begin position="1"/>
        <end position="177"/>
    </location>
</feature>
<reference key="1">
    <citation type="journal article" date="2003" name="Lancet">
        <title>Genome sequence of Vibrio parahaemolyticus: a pathogenic mechanism distinct from that of V. cholerae.</title>
        <authorList>
            <person name="Makino K."/>
            <person name="Oshima K."/>
            <person name="Kurokawa K."/>
            <person name="Yokoyama K."/>
            <person name="Uda T."/>
            <person name="Tagomori K."/>
            <person name="Iijima Y."/>
            <person name="Najima M."/>
            <person name="Nakano M."/>
            <person name="Yamashita A."/>
            <person name="Kubota Y."/>
            <person name="Kimura S."/>
            <person name="Yasunaga T."/>
            <person name="Honda T."/>
            <person name="Shinagawa H."/>
            <person name="Hattori M."/>
            <person name="Iida T."/>
        </authorList>
    </citation>
    <scope>NUCLEOTIDE SEQUENCE [LARGE SCALE GENOMIC DNA]</scope>
    <source>
        <strain>RIMD 2210633</strain>
    </source>
</reference>
<protein>
    <recommendedName>
        <fullName evidence="1">Large ribosomal subunit protein uL6</fullName>
    </recommendedName>
    <alternativeName>
        <fullName evidence="2">50S ribosomal protein L6</fullName>
    </alternativeName>
</protein>
<accession>Q87SZ8</accession>
<keyword id="KW-0687">Ribonucleoprotein</keyword>
<keyword id="KW-0689">Ribosomal protein</keyword>
<keyword id="KW-0694">RNA-binding</keyword>
<keyword id="KW-0699">rRNA-binding</keyword>
<name>RL6_VIBPA</name>
<dbReference type="EMBL" id="BA000031">
    <property type="protein sequence ID" value="BAC58535.1"/>
    <property type="molecule type" value="Genomic_DNA"/>
</dbReference>
<dbReference type="RefSeq" id="NP_796651.1">
    <property type="nucleotide sequence ID" value="NC_004603.1"/>
</dbReference>
<dbReference type="RefSeq" id="WP_005455654.1">
    <property type="nucleotide sequence ID" value="NC_004603.1"/>
</dbReference>
<dbReference type="SMR" id="Q87SZ8"/>
<dbReference type="GeneID" id="1187739"/>
<dbReference type="KEGG" id="vpa:VP0272"/>
<dbReference type="PATRIC" id="fig|223926.6.peg.263"/>
<dbReference type="eggNOG" id="COG0097">
    <property type="taxonomic scope" value="Bacteria"/>
</dbReference>
<dbReference type="HOGENOM" id="CLU_065464_1_2_6"/>
<dbReference type="Proteomes" id="UP000002493">
    <property type="component" value="Chromosome 1"/>
</dbReference>
<dbReference type="GO" id="GO:0022625">
    <property type="term" value="C:cytosolic large ribosomal subunit"/>
    <property type="evidence" value="ECO:0007669"/>
    <property type="project" value="TreeGrafter"/>
</dbReference>
<dbReference type="GO" id="GO:0019843">
    <property type="term" value="F:rRNA binding"/>
    <property type="evidence" value="ECO:0007669"/>
    <property type="project" value="UniProtKB-UniRule"/>
</dbReference>
<dbReference type="GO" id="GO:0003735">
    <property type="term" value="F:structural constituent of ribosome"/>
    <property type="evidence" value="ECO:0007669"/>
    <property type="project" value="InterPro"/>
</dbReference>
<dbReference type="GO" id="GO:0002181">
    <property type="term" value="P:cytoplasmic translation"/>
    <property type="evidence" value="ECO:0007669"/>
    <property type="project" value="TreeGrafter"/>
</dbReference>
<dbReference type="FunFam" id="3.90.930.12:FF:000001">
    <property type="entry name" value="50S ribosomal protein L6"/>
    <property type="match status" value="1"/>
</dbReference>
<dbReference type="FunFam" id="3.90.930.12:FF:000002">
    <property type="entry name" value="50S ribosomal protein L6"/>
    <property type="match status" value="1"/>
</dbReference>
<dbReference type="Gene3D" id="3.90.930.12">
    <property type="entry name" value="Ribosomal protein L6, alpha-beta domain"/>
    <property type="match status" value="2"/>
</dbReference>
<dbReference type="HAMAP" id="MF_01365_B">
    <property type="entry name" value="Ribosomal_uL6_B"/>
    <property type="match status" value="1"/>
</dbReference>
<dbReference type="InterPro" id="IPR000702">
    <property type="entry name" value="Ribosomal_uL6-like"/>
</dbReference>
<dbReference type="InterPro" id="IPR036789">
    <property type="entry name" value="Ribosomal_uL6-like_a/b-dom_sf"/>
</dbReference>
<dbReference type="InterPro" id="IPR020040">
    <property type="entry name" value="Ribosomal_uL6_a/b-dom"/>
</dbReference>
<dbReference type="InterPro" id="IPR019906">
    <property type="entry name" value="Ribosomal_uL6_bac-type"/>
</dbReference>
<dbReference type="InterPro" id="IPR002358">
    <property type="entry name" value="Ribosomal_uL6_CS"/>
</dbReference>
<dbReference type="NCBIfam" id="TIGR03654">
    <property type="entry name" value="L6_bact"/>
    <property type="match status" value="1"/>
</dbReference>
<dbReference type="PANTHER" id="PTHR11655">
    <property type="entry name" value="60S/50S RIBOSOMAL PROTEIN L6/L9"/>
    <property type="match status" value="1"/>
</dbReference>
<dbReference type="PANTHER" id="PTHR11655:SF14">
    <property type="entry name" value="LARGE RIBOSOMAL SUBUNIT PROTEIN UL6M"/>
    <property type="match status" value="1"/>
</dbReference>
<dbReference type="Pfam" id="PF00347">
    <property type="entry name" value="Ribosomal_L6"/>
    <property type="match status" value="2"/>
</dbReference>
<dbReference type="PIRSF" id="PIRSF002162">
    <property type="entry name" value="Ribosomal_L6"/>
    <property type="match status" value="1"/>
</dbReference>
<dbReference type="PRINTS" id="PR00059">
    <property type="entry name" value="RIBOSOMALL6"/>
</dbReference>
<dbReference type="SUPFAM" id="SSF56053">
    <property type="entry name" value="Ribosomal protein L6"/>
    <property type="match status" value="2"/>
</dbReference>
<dbReference type="PROSITE" id="PS00525">
    <property type="entry name" value="RIBOSOMAL_L6_1"/>
    <property type="match status" value="1"/>
</dbReference>
<sequence length="177" mass="18779">MSRVAKAPVAIPAGVEVKLNGQEITVKGAKGELTRVLNDAVVIAQEENNLTFGPKEGVANAWAQAGTARALVNNMVVGVTEGFTKKLTLKGVGYRAAIKGNAVGLTLGFSHPVEHELPAGIKAECPSQTEIVITGCDKQLVGQVAADIRSYRQPEPYKGKGVRYADENVRTKEAKKK</sequence>
<organism>
    <name type="scientific">Vibrio parahaemolyticus serotype O3:K6 (strain RIMD 2210633)</name>
    <dbReference type="NCBI Taxonomy" id="223926"/>
    <lineage>
        <taxon>Bacteria</taxon>
        <taxon>Pseudomonadati</taxon>
        <taxon>Pseudomonadota</taxon>
        <taxon>Gammaproteobacteria</taxon>
        <taxon>Vibrionales</taxon>
        <taxon>Vibrionaceae</taxon>
        <taxon>Vibrio</taxon>
    </lineage>
</organism>
<gene>
    <name evidence="1" type="primary">rplF</name>
    <name type="ordered locus">VP0272</name>
</gene>